<evidence type="ECO:0000255" key="1">
    <source>
        <dbReference type="HAMAP-Rule" id="MF_02133"/>
    </source>
</evidence>
<evidence type="ECO:0000256" key="2">
    <source>
        <dbReference type="SAM" id="MobiDB-lite"/>
    </source>
</evidence>
<evidence type="ECO:0000303" key="3">
    <source>
    </source>
</evidence>
<evidence type="ECO:0000305" key="4"/>
<evidence type="ECO:0000305" key="5">
    <source>
    </source>
</evidence>
<evidence type="ECO:0000312" key="6">
    <source>
        <dbReference type="EMBL" id="OGF53981.1"/>
    </source>
</evidence>
<organism>
    <name type="scientific">Fraserbacteria sp. (strain RBG_16_55_9)</name>
    <dbReference type="NCBI Taxonomy" id="1817864"/>
    <lineage>
        <taxon>Bacteria</taxon>
        <taxon>Candidatus Fraseribacteriota</taxon>
    </lineage>
</organism>
<reference key="1">
    <citation type="journal article" date="2016" name="Nat. Commun.">
        <title>Thousands of microbial genomes shed light on interconnected biogeochemical processes in an aquifer system.</title>
        <authorList>
            <person name="Anantharaman K."/>
            <person name="Brown C.T."/>
            <person name="Hug L.A."/>
            <person name="Sharon I."/>
            <person name="Castelle C.J."/>
            <person name="Probst A.J."/>
            <person name="Thomas B.C."/>
            <person name="Singh A."/>
            <person name="Wilkins M.J."/>
            <person name="Karaoz U."/>
            <person name="Brodie E.L."/>
            <person name="Williams K.H."/>
            <person name="Hubbard S.S."/>
            <person name="Banfield J.F."/>
        </authorList>
    </citation>
    <scope>NUCLEOTIDE SEQUENCE [LARGE SCALE GENOMIC DNA]</scope>
    <source>
        <strain>RBG_16_55_9</strain>
    </source>
</reference>
<reference key="2">
    <citation type="journal article" date="2017" name="Biochem. Biophys. Res. Commun.">
        <title>Identification of UBact, a ubiquitin-like protein, along with other homologous components of a conjugation system and the proteasome in different gram-negative bacteria.</title>
        <authorList>
            <person name="Lehmann G."/>
            <person name="Udasin R.G."/>
            <person name="Livneh I."/>
            <person name="Ciechanover A."/>
        </authorList>
    </citation>
    <scope>PREDICTED FUNCTION</scope>
    <source>
        <strain>RBG_16_55_9</strain>
    </source>
</reference>
<accession>A0A1F5UTC9</accession>
<comment type="function">
    <text evidence="5">May function as a protein modifier covalently attached to lysine residues of substrate proteins. This may serve to target the modified proteins for degradation by proteasomes.</text>
</comment>
<comment type="similarity">
    <text evidence="1">Belongs to the ubiquitin-like protein UBact family.</text>
</comment>
<gene>
    <name evidence="3" type="primary">ubact</name>
    <name evidence="6" type="ORF">A2Z21_05185</name>
</gene>
<keyword id="KW-1017">Isopeptide bond</keyword>
<keyword id="KW-0833">Ubl conjugation pathway</keyword>
<name>UBACT_FRAXR</name>
<proteinExistence type="inferred from homology"/>
<protein>
    <recommendedName>
        <fullName evidence="3">Prokaryotic ubiquitin-like protein UBact</fullName>
    </recommendedName>
</protein>
<sequence length="60" mass="7091">MPERKTQPTTDQPWTKPNDGGDESGPRSPEVERPNTRDLLERMKRVDPRQARRYRQRSGE</sequence>
<feature type="chain" id="PRO_0000441770" description="Prokaryotic ubiquitin-like protein UBact">
    <location>
        <begin position="1"/>
        <end position="60"/>
    </location>
</feature>
<feature type="region of interest" description="Disordered" evidence="2">
    <location>
        <begin position="1"/>
        <end position="60"/>
    </location>
</feature>
<feature type="compositionally biased region" description="Basic and acidic residues" evidence="2">
    <location>
        <begin position="29"/>
        <end position="50"/>
    </location>
</feature>
<feature type="compositionally biased region" description="Basic residues" evidence="2">
    <location>
        <begin position="51"/>
        <end position="60"/>
    </location>
</feature>
<feature type="cross-link" description="Isoglutamyl lysine isopeptide (Glu-Lys) (interchain with K-? in acceptor proteins)" evidence="4">
    <location>
        <position position="60"/>
    </location>
</feature>
<dbReference type="EMBL" id="MFGX01000092">
    <property type="protein sequence ID" value="OGF53981.1"/>
    <property type="molecule type" value="Genomic_DNA"/>
</dbReference>
<dbReference type="SMR" id="A0A1F5UTC9"/>
<dbReference type="STRING" id="1817864.A2Z21_05185"/>
<dbReference type="Proteomes" id="UP000179157">
    <property type="component" value="Unassembled WGS sequence"/>
</dbReference>
<dbReference type="GO" id="GO:0031386">
    <property type="term" value="F:protein tag activity"/>
    <property type="evidence" value="ECO:0007669"/>
    <property type="project" value="UniProtKB-UniRule"/>
</dbReference>
<dbReference type="HAMAP" id="MF_02133">
    <property type="entry name" value="UBact"/>
    <property type="match status" value="1"/>
</dbReference>
<dbReference type="InterPro" id="IPR037543">
    <property type="entry name" value="UBact"/>
</dbReference>
<dbReference type="NCBIfam" id="NF033388">
    <property type="entry name" value="ubiq_like_UBact"/>
    <property type="match status" value="1"/>
</dbReference>
<dbReference type="Pfam" id="PF20513">
    <property type="entry name" value="UBact"/>
    <property type="match status" value="1"/>
</dbReference>